<evidence type="ECO:0000250" key="1">
    <source>
        <dbReference type="UniProtKB" id="Q07878"/>
    </source>
</evidence>
<evidence type="ECO:0000250" key="2">
    <source>
        <dbReference type="UniProtKB" id="Q80TY5"/>
    </source>
</evidence>
<evidence type="ECO:0000255" key="3"/>
<evidence type="ECO:0000256" key="4">
    <source>
        <dbReference type="SAM" id="MobiDB-lite"/>
    </source>
</evidence>
<evidence type="ECO:0000269" key="5">
    <source>
    </source>
</evidence>
<evidence type="ECO:0000269" key="6">
    <source>
    </source>
</evidence>
<evidence type="ECO:0000269" key="7">
    <source>
    </source>
</evidence>
<evidence type="ECO:0000269" key="8">
    <source>
    </source>
</evidence>
<evidence type="ECO:0000269" key="9">
    <source>
    </source>
</evidence>
<evidence type="ECO:0000269" key="10">
    <source>
    </source>
</evidence>
<evidence type="ECO:0000269" key="11">
    <source>
    </source>
</evidence>
<evidence type="ECO:0000269" key="12">
    <source>
    </source>
</evidence>
<evidence type="ECO:0000269" key="13">
    <source>
    </source>
</evidence>
<evidence type="ECO:0000269" key="14">
    <source>
    </source>
</evidence>
<evidence type="ECO:0000269" key="15">
    <source>
    </source>
</evidence>
<evidence type="ECO:0000269" key="16">
    <source>
    </source>
</evidence>
<evidence type="ECO:0000269" key="17">
    <source>
    </source>
</evidence>
<evidence type="ECO:0000269" key="18">
    <source>
    </source>
</evidence>
<evidence type="ECO:0000269" key="19">
    <source>
    </source>
</evidence>
<evidence type="ECO:0000269" key="20">
    <source>
    </source>
</evidence>
<evidence type="ECO:0000269" key="21">
    <source>
    </source>
</evidence>
<evidence type="ECO:0000269" key="22">
    <source>
    </source>
</evidence>
<evidence type="ECO:0000269" key="23">
    <source>
    </source>
</evidence>
<evidence type="ECO:0000269" key="24">
    <source>
    </source>
</evidence>
<evidence type="ECO:0000269" key="25">
    <source>
    </source>
</evidence>
<evidence type="ECO:0000269" key="26">
    <source>
    </source>
</evidence>
<evidence type="ECO:0000269" key="27">
    <source>
    </source>
</evidence>
<evidence type="ECO:0000269" key="28">
    <source>
    </source>
</evidence>
<evidence type="ECO:0000269" key="29">
    <source>
    </source>
</evidence>
<evidence type="ECO:0000269" key="30">
    <source>
    </source>
</evidence>
<evidence type="ECO:0000269" key="31">
    <source>
    </source>
</evidence>
<evidence type="ECO:0000269" key="32">
    <source>
    </source>
</evidence>
<evidence type="ECO:0000269" key="33">
    <source>
    </source>
</evidence>
<evidence type="ECO:0000269" key="34">
    <source>
    </source>
</evidence>
<evidence type="ECO:0000269" key="35">
    <source>
    </source>
</evidence>
<evidence type="ECO:0000269" key="36">
    <source>
    </source>
</evidence>
<evidence type="ECO:0000269" key="37">
    <source>
    </source>
</evidence>
<evidence type="ECO:0000269" key="38">
    <source>
    </source>
</evidence>
<evidence type="ECO:0000269" key="39">
    <source>
    </source>
</evidence>
<evidence type="ECO:0000303" key="40">
    <source>
    </source>
</evidence>
<evidence type="ECO:0000303" key="41">
    <source>
    </source>
</evidence>
<evidence type="ECO:0000303" key="42">
    <source>
    </source>
</evidence>
<evidence type="ECO:0000305" key="43"/>
<evidence type="ECO:0000305" key="44">
    <source>
    </source>
</evidence>
<evidence type="ECO:0000305" key="45">
    <source>
    </source>
</evidence>
<evidence type="ECO:0007744" key="46">
    <source>
    </source>
</evidence>
<sequence length="4022" mass="448664">MLESYVTPILMSYVNRYIKNLKPSDLQLSLWGGDVVLSKLELKLDVLEQELKLPFTFLSGHIHELRIHVPWTKLGSEPVVITINTMECILKLKDGIQDDHESCGSNSTNRSTAESTKSSIKPRRMQQAAPTDPDLPPGYVQSLIRRVVNNVNIVINNLILKYVEDDIVLSVNITSAECYTVGELWDRAFMDISATDLVLRKVINFSDCTVCLDKRNASGKIEFYQDPLLYKCSFRTRLHFTYENLNSKMPSVIKIHTLVESLKLSITDQQLPMFIRIMQLGIALYYGEIGNFKEGEIEDLTCHNKDMLGNITGSEDETRIDMQYPAQHKGQELYSQQDEEQPQGWVSWAWSFVPAIVSYDDGEEDFVGNDPASTMHQQKAQTLKDPIVSIGFYCTKATVTFKLTEMQVESSYYSPQKVKSKEVLCWEQEGTTVEALMMGEPFFDCQIGFVGCRAMCLKGIMGVKDFEENMNRSETEACFFICGDNLSTKGFTYLTNSLFDYRSPENNGTRAEFILDSTHHKETYTEIAGMQRFGAFYMDYLYTMENTSGKGSTNQQDFSSGKSEDLGTVQEKSTKSLVIGPLDFRLDSSAVHRILKMIVCALEHEYEPYSRLKSDIKDENETILNPEEVALLEEYIPTRHTSVTLLKCTCTISMAEFNLLDHLLPVIMGEKNSSNFMNTTNFQSLRPLPSIRILVDKINLEHSVPMYAEQLVHVVSSLTQPSDNLLHYCYVHCYLKIFGFQAGLTSLDCSGSYCLPVPVIPSFSTALYGKLLKLPTCWTKRSQIAITEGIFELPNLTIQATRAQTLLLQAIYQSWSHLGNVSSSAVIEALINEIFLSIGVKSKNPLPTLEGSIQNVELKYCSTSLVKCASGTMGSIKICAKAPVDSGKEKLIPLLQGPSDTKDLHSTKWLNESRKPESLLAPDLMAFTIQVPQYIDYCHNSGAVLLCSIQGLAVNIDPILYTWLIYQPQKRTSRHMQQQPVVAVPLVMPVCRRKEDEVSIGSAPLAKQQSYQASEYASSPVKTKTVTESRPLSVPVKAMLNISESCRSPEERMKEFIGIVWNAVKHLTLQLEVQSCCVFIPNDSLPSPSTIVSGDIPGTVRSWYHGQTSMPGTLVLCLPQIKIISAGHKYMEPLQEIPFVIPRPILEEGDAFPWTISLHNFSIYTLLGKQVTLCLVEPMGCTSTLAVTSQKLLATGPDTRHSFVVCLHVDLESLEIKCSNPQVQLFYELTDIMNKVWNKIQKRGNLNLSPTSPETMAGPVPTSPVRSSIGTAPPDTSTCSPSADIGTTTEGDSIQAGEESPFSDSVTLEQTTSNIGGTSGRVSLWMQWVLPKITIKLFAPDPENKGTEVCMVSELEDLSASIDVQDVYTKVKCKIESFNIDHYRSSLGEECWSLGQCGGVFLSCTDKLNRRTLLVRPISKQDPFSNCSGFFPSTTTKLLDGTHQQHGFLSLTYTKAVTKNVRHKLTSRNERRSFHKLSEGLMDGSPHFLHEILLSAQAFDIVLYFPLLNAIASIFQAKLPKTQKEKRKSPGQPMRTHTLTSRNLPLIYVNTSVIRIFIPKTEEMQPTVEANQAAKEDTVVLKIGSVAMAPQADNPLGRSVLRKDIYQRALNLGILRDPGSEIEDRQYQIDLQSINIGTAQWHQLKPEKESVSGGVVTETERNSQNPALEWNMASSIRRHQERRAILTPVLTDFSVRITGAPAVIFTKVVSPENLHTEEILVCGHSLEVNITTNLDFFLSVAQVQLLHQLIVANMTGLEPSNKAAEISKQEQKKVDIFDGGMAETSSRYSGAQDSGIGSDSVKIRIVQIEQHSGASQHRIARPSRQSSIVKNLNFIPFDIFITASRISLMTYSCMALSKSKSQEQKNNEKTDKSSLNLPEVDSDVAKPNQACISTVTAEDLLRSSISFPSGKKIGVLSLESLHASTRSSARQALGITIVRQPGRRGTGDLQLEPFLYFIVSQPSLLLSCHHRKQRVEVSIFDAVLKGVASDYKCIDPGKTLPEALDYCTVWLQTVPGEIDSKSGIPPSFITLQIKDFLNGPADVNLDISKPLKANLSFTKLDQINLFLKKIKNAHSLAHSEETSAMSNTMVNKDDLPVSKYYRGKLSKPKIHGDGVQKISAQENMWRAVSCFQKISVQTTQIVISMETVPHTSKPCLLASLSNLNGSLSVKATQKVPGIILGSSFLLSINDFLLKTSLKERSRILIGPCCATANLEAKWCKHSGNPGPEQSIPKISIDLRGGLLQVFWGQEHLNCLVLLHELLNGYLNEEGNFEVQVSEPVPQMSSPVEKNQTFKSEQSSDDLRTGLFQYVQDAESLKLPGVYEVLFYNETEDCPGMMLWRYPEPRVLTLVRITPVPFNTTEDPDISTADLGDVLQVPCSLEYWDELQKVFVAFREFNLSESKVCELQLPDINLVNDQKKLVSSDLWRIVLNSSQNGADDQSSASESGSQSTCDPLVTPTALAACTRVDSCFTPWFVPSLCVSFQFAHLEFHLCHHLDQLGTAAPQYLQPFVSDRNMPSELEYMIVSFREPHMYLRQWNNGSVCQEIQFLAQADCKLLECRNVTMQSVVKPFSIFGQMAVSSDVVEKLLDCTVIVDSVFVNLGQHVVHSLNTAIQAWQQNKCPEVEELVFSHFVICNDTQETLRFGQVDTDENILLASLHSHQYSWRSHKSPQLLHICIEGWGNWRWSEPFSVDHAGTFIRTIQYRGRTASLIIKVQQLNGVQKQIIICGRQIICSYLSQSIELKVVQHYIGQDGQAVVREHFDCLTAKQKLPSYILENNELTELCVKAKGDEDWSRDVCLESKAPEYSIVIQVPSSNSSIIYVWCTVLTLEPNSQVQQRMIVFSPLFIMRSHLPDPIIIHLEKRSLGLSETQIIPGKGQEKPLQNIEPDLVHHLTFQAREEYDPSDCAVPISTSLIKQIATKVHPGGTVNQILDEFYGPEKSLQPIWPYNKKDSDRNEQLSQWDSPMRVKLSIWKPYVRTLLIELLPWALLINESKWDLWLFEGEKIVLQVPAGKIIIPPNFQEAFQIGIYWANTNTVHKSVAIKLVHNLTSPKWKDGGNGEVVTLDEEAFVDTEIRLGAFPGHQKLCQFCISSMVQQGIQIIQIEDKTTIINNTPYQIFYKPQLSVCNPHSGKEYFRVPDSATFSICPGGEQPAMKSSSLPCWDLMPDISQSVLDASLLQKQIMLGFSPAPGADSSQCWSLPAIVRPEFPRQSVAVPLGNFRENGFCTRAIVLTYQEHLGVTYLTLSEDPSPRVIIHNRCPVKMLIKENIKDIPKFEVYCKKIPSECSIHHELYHQISSYPDCKTKDLLPSLLLRVEPLDEVTTEWSDAIDINSQGTQVVFLTGFGYVYVDVVHQCGTVFITVAPEGKAGPILTNTNRAPEKIVTFKMFITQLSLAVFDDLTHHKASAELLRLTLDNIFLCVAPGAGPLPGEEPVAALFELYCVEICCGDLQLDNQLYNKSNFHFAVLVCQGEKAEPIQCSKMQSLLISNKELEEYKEKCFIKLCITLNEGKSILCDINEFSFELKPARLYVEDTFVYYIKTLFDTYLPNSRLAGHSTHLSGGKQVLPMQVTQHARALVNPVKLRKLVIQPVNLLVSIHASLKLYIASDHTPLSFSVFERGPIFTTARQLVHALAMHYAAGALFRAGWVVGSLDILGSPASLVRSIGNGVADFFRLPYEGLTRGPGAFVSGVSRGTTSFVKHISKGTLTSITNLATSLARNMDRLSLDEEHYNRQEEWRRQLPESLGEGLRQGLSRLGISLLGAIAGIVDQPMQNFQKTSEAQASAGHKAKGVISGVGKGIMGVFTKPIGGAAELVSQTGYGILHGAGLSQLPKQRHQPSDLHADQAPNSHVKYVWKMLQSLGRPEVHMALDVVLVRGSGQEHEGCLLLTSEVLFVVSVSEDTQQQAFPVTEIDCAQDSKQNNLLTVQLKQPRVACDVEVDGVRERLSEQQYNRLVDYITKTSCHLAPSCSSMQIPCPVVAAEPPPSTVKTYHYLVDPHFAQVFLSKFTMVKNKALRKGFP</sequence>
<gene>
    <name type="primary">VPS13B</name>
    <name type="synonym">CHS1</name>
    <name type="synonym">COH1</name>
    <name type="synonym">KIAA0532</name>
</gene>
<name>VP13B_HUMAN</name>
<keyword id="KW-0025">Alternative splicing</keyword>
<keyword id="KW-0968">Cytoplasmic vesicle</keyword>
<keyword id="KW-0225">Disease variant</keyword>
<keyword id="KW-0967">Endosome</keyword>
<keyword id="KW-0333">Golgi apparatus</keyword>
<keyword id="KW-0445">Lipid transport</keyword>
<keyword id="KW-0446">Lipid-binding</keyword>
<keyword id="KW-0458">Lysosome</keyword>
<keyword id="KW-0472">Membrane</keyword>
<keyword id="KW-0550">Obesity</keyword>
<keyword id="KW-0597">Phosphoprotein</keyword>
<keyword id="KW-1267">Proteomics identification</keyword>
<keyword id="KW-1185">Reference proteome</keyword>
<keyword id="KW-0813">Transport</keyword>
<accession>Q7Z7G8</accession>
<accession>C9JD30</accession>
<accession>Q709C6</accession>
<accession>Q709C7</accession>
<accession>Q7Z7G4</accession>
<accession>Q7Z7G5</accession>
<accession>Q7Z7G6</accession>
<accession>Q7Z7G7</accession>
<accession>Q8NB77</accession>
<accession>Q9NWV1</accession>
<accession>Q9Y4E7</accession>
<proteinExistence type="evidence at protein level"/>
<protein>
    <recommendedName>
        <fullName evidence="43">Intermembrane lipid transfer protein VPS13B</fullName>
    </recommendedName>
    <alternativeName>
        <fullName>Cohen syndrome protein 1</fullName>
    </alternativeName>
    <alternativeName>
        <fullName>Vacuolar protein sorting-associated protein 13B</fullName>
    </alternativeName>
</protein>
<dbReference type="EMBL" id="AY223814">
    <property type="protein sequence ID" value="AAP41102.1"/>
    <property type="molecule type" value="mRNA"/>
</dbReference>
<dbReference type="EMBL" id="AY223815">
    <property type="protein sequence ID" value="AAP41103.1"/>
    <property type="molecule type" value="mRNA"/>
</dbReference>
<dbReference type="EMBL" id="AY223816">
    <property type="protein sequence ID" value="AAP41104.1"/>
    <property type="molecule type" value="mRNA"/>
</dbReference>
<dbReference type="EMBL" id="AY223817">
    <property type="protein sequence ID" value="AAP41105.1"/>
    <property type="molecule type" value="mRNA"/>
</dbReference>
<dbReference type="EMBL" id="AY223818">
    <property type="protein sequence ID" value="AAP41106.1"/>
    <property type="molecule type" value="mRNA"/>
</dbReference>
<dbReference type="EMBL" id="AJ608772">
    <property type="protein sequence ID" value="CAE75584.1"/>
    <property type="molecule type" value="mRNA"/>
</dbReference>
<dbReference type="EMBL" id="AJ608773">
    <property type="protein sequence ID" value="CAE75585.1"/>
    <property type="molecule type" value="mRNA"/>
</dbReference>
<dbReference type="EMBL" id="AK091431">
    <property type="protein sequence ID" value="BAC03664.1"/>
    <property type="status" value="ALT_INIT"/>
    <property type="molecule type" value="mRNA"/>
</dbReference>
<dbReference type="EMBL" id="AK000590">
    <property type="protein sequence ID" value="BAA91275.1"/>
    <property type="molecule type" value="mRNA"/>
</dbReference>
<dbReference type="EMBL" id="AC018442">
    <property type="status" value="NOT_ANNOTATED_CDS"/>
    <property type="molecule type" value="Genomic_DNA"/>
</dbReference>
<dbReference type="EMBL" id="AC023933">
    <property type="status" value="NOT_ANNOTATED_CDS"/>
    <property type="molecule type" value="Genomic_DNA"/>
</dbReference>
<dbReference type="EMBL" id="AC026827">
    <property type="status" value="NOT_ANNOTATED_CDS"/>
    <property type="molecule type" value="Genomic_DNA"/>
</dbReference>
<dbReference type="EMBL" id="AC104986">
    <property type="status" value="NOT_ANNOTATED_CDS"/>
    <property type="molecule type" value="Genomic_DNA"/>
</dbReference>
<dbReference type="EMBL" id="AC105195">
    <property type="status" value="NOT_ANNOTATED_CDS"/>
    <property type="molecule type" value="Genomic_DNA"/>
</dbReference>
<dbReference type="EMBL" id="AC105328">
    <property type="status" value="NOT_ANNOTATED_CDS"/>
    <property type="molecule type" value="Genomic_DNA"/>
</dbReference>
<dbReference type="EMBL" id="AC107909">
    <property type="status" value="NOT_ANNOTATED_CDS"/>
    <property type="molecule type" value="Genomic_DNA"/>
</dbReference>
<dbReference type="EMBL" id="AP004289">
    <property type="status" value="NOT_ANNOTATED_CDS"/>
    <property type="molecule type" value="Genomic_DNA"/>
</dbReference>
<dbReference type="EMBL" id="AP004290">
    <property type="status" value="NOT_ANNOTATED_CDS"/>
    <property type="molecule type" value="Genomic_DNA"/>
</dbReference>
<dbReference type="EMBL" id="AB011104">
    <property type="protein sequence ID" value="BAA25458.1"/>
    <property type="molecule type" value="mRNA"/>
</dbReference>
<dbReference type="CCDS" id="CCDS47903.1">
    <molecule id="Q7Z7G8-5"/>
</dbReference>
<dbReference type="CCDS" id="CCDS6280.1">
    <molecule id="Q7Z7G8-1"/>
</dbReference>
<dbReference type="CCDS" id="CCDS6281.1">
    <molecule id="Q7Z7G8-2"/>
</dbReference>
<dbReference type="PIR" id="T00070">
    <property type="entry name" value="T00070"/>
</dbReference>
<dbReference type="RefSeq" id="NP_056058.2">
    <molecule id="Q7Z7G8-4"/>
    <property type="nucleotide sequence ID" value="NM_015243.2"/>
</dbReference>
<dbReference type="RefSeq" id="NP_060360.3">
    <molecule id="Q7Z7G8-1"/>
    <property type="nucleotide sequence ID" value="NM_017890.4"/>
</dbReference>
<dbReference type="RefSeq" id="NP_689777.3">
    <molecule id="Q7Z7G8-2"/>
    <property type="nucleotide sequence ID" value="NM_152564.4"/>
</dbReference>
<dbReference type="RefSeq" id="NP_858047.2">
    <molecule id="Q7Z7G8-5"/>
    <property type="nucleotide sequence ID" value="NM_181661.3"/>
</dbReference>
<dbReference type="RefSeq" id="XP_005250857.1">
    <property type="nucleotide sequence ID" value="XM_005250800.3"/>
</dbReference>
<dbReference type="RefSeq" id="XP_005250858.1">
    <property type="nucleotide sequence ID" value="XM_005250801.4"/>
</dbReference>
<dbReference type="RefSeq" id="XP_011515150.1">
    <property type="nucleotide sequence ID" value="XM_011516848.2"/>
</dbReference>
<dbReference type="BioGRID" id="127612">
    <property type="interactions" value="101"/>
</dbReference>
<dbReference type="FunCoup" id="Q7Z7G8">
    <property type="interactions" value="2255"/>
</dbReference>
<dbReference type="IntAct" id="Q7Z7G8">
    <property type="interactions" value="37"/>
</dbReference>
<dbReference type="STRING" id="9606.ENSP00000351346"/>
<dbReference type="TCDB" id="1.R.2.1.4">
    <property type="family name" value="the bridge-like lipid transfer protein (bltp) family"/>
</dbReference>
<dbReference type="CarbonylDB" id="Q7Z7G8"/>
<dbReference type="GlyGen" id="Q7Z7G8">
    <property type="glycosylation" value="5 sites, 3 N-linked glycans (3 sites), 1 O-linked glycan (1 site)"/>
</dbReference>
<dbReference type="iPTMnet" id="Q7Z7G8"/>
<dbReference type="MetOSite" id="Q7Z7G8"/>
<dbReference type="PhosphoSitePlus" id="Q7Z7G8"/>
<dbReference type="SwissPalm" id="Q7Z7G8"/>
<dbReference type="BioMuta" id="VPS13B"/>
<dbReference type="DMDM" id="308153515"/>
<dbReference type="jPOST" id="Q7Z7G8"/>
<dbReference type="MassIVE" id="Q7Z7G8"/>
<dbReference type="PaxDb" id="9606-ENSP00000351346"/>
<dbReference type="PeptideAtlas" id="Q7Z7G8"/>
<dbReference type="ProteomicsDB" id="69541">
    <molecule id="Q7Z7G8-1"/>
</dbReference>
<dbReference type="ProteomicsDB" id="69542">
    <molecule id="Q7Z7G8-2"/>
</dbReference>
<dbReference type="ProteomicsDB" id="69543">
    <molecule id="Q7Z7G8-3"/>
</dbReference>
<dbReference type="ProteomicsDB" id="69544">
    <molecule id="Q7Z7G8-4"/>
</dbReference>
<dbReference type="ProteomicsDB" id="69545">
    <molecule id="Q7Z7G8-5"/>
</dbReference>
<dbReference type="ProteomicsDB" id="69546">
    <molecule id="Q7Z7G8-6"/>
</dbReference>
<dbReference type="Pumba" id="Q7Z7G8"/>
<dbReference type="Antibodypedia" id="26091">
    <property type="antibodies" value="90 antibodies from 24 providers"/>
</dbReference>
<dbReference type="DNASU" id="157680"/>
<dbReference type="Ensembl" id="ENST00000357162.7">
    <molecule id="Q7Z7G8-2"/>
    <property type="protein sequence ID" value="ENSP00000349685.2"/>
    <property type="gene ID" value="ENSG00000132549.20"/>
</dbReference>
<dbReference type="Ensembl" id="ENST00000358544.7">
    <molecule id="Q7Z7G8-1"/>
    <property type="protein sequence ID" value="ENSP00000351346.2"/>
    <property type="gene ID" value="ENSG00000132549.20"/>
</dbReference>
<dbReference type="Ensembl" id="ENST00000441350.2">
    <molecule id="Q7Z7G8-5"/>
    <property type="protein sequence ID" value="ENSP00000398472.2"/>
    <property type="gene ID" value="ENSG00000132549.20"/>
</dbReference>
<dbReference type="Ensembl" id="ENST00000496144.5">
    <molecule id="Q7Z7G8-3"/>
    <property type="protein sequence ID" value="ENSP00000430900.1"/>
    <property type="gene ID" value="ENSG00000132549.20"/>
</dbReference>
<dbReference type="GeneID" id="157680"/>
<dbReference type="KEGG" id="hsa:157680"/>
<dbReference type="MANE-Select" id="ENST00000357162.7">
    <molecule id="Q7Z7G8-2"/>
    <property type="protein sequence ID" value="ENSP00000349685.2"/>
    <property type="RefSeq nucleotide sequence ID" value="NM_152564.5"/>
    <property type="RefSeq protein sequence ID" value="NP_689777.3"/>
</dbReference>
<dbReference type="UCSC" id="uc003yis.4">
    <molecule id="Q7Z7G8-1"/>
    <property type="organism name" value="human"/>
</dbReference>
<dbReference type="AGR" id="HGNC:2183"/>
<dbReference type="CTD" id="157680"/>
<dbReference type="DisGeNET" id="157680"/>
<dbReference type="GeneCards" id="VPS13B"/>
<dbReference type="GeneReviews" id="VPS13B"/>
<dbReference type="HGNC" id="HGNC:2183">
    <property type="gene designation" value="VPS13B"/>
</dbReference>
<dbReference type="HPA" id="ENSG00000132549">
    <property type="expression patterns" value="Low tissue specificity"/>
</dbReference>
<dbReference type="MalaCards" id="VPS13B"/>
<dbReference type="MIM" id="216550">
    <property type="type" value="phenotype"/>
</dbReference>
<dbReference type="MIM" id="607817">
    <property type="type" value="gene"/>
</dbReference>
<dbReference type="neXtProt" id="NX_Q7Z7G8"/>
<dbReference type="OpenTargets" id="ENSG00000132549"/>
<dbReference type="Orphanet" id="193">
    <property type="disease" value="Cohen syndrome"/>
</dbReference>
<dbReference type="PharmGKB" id="PA26699"/>
<dbReference type="VEuPathDB" id="HostDB:ENSG00000132549"/>
<dbReference type="eggNOG" id="KOG1809">
    <property type="taxonomic scope" value="Eukaryota"/>
</dbReference>
<dbReference type="GeneTree" id="ENSGT00940000154684"/>
<dbReference type="HOGENOM" id="CLU_331741_0_0_1"/>
<dbReference type="InParanoid" id="Q7Z7G8"/>
<dbReference type="OMA" id="SFYMPRI"/>
<dbReference type="OrthoDB" id="445152at2759"/>
<dbReference type="PAN-GO" id="Q7Z7G8">
    <property type="GO annotations" value="0 GO annotations based on evolutionary models"/>
</dbReference>
<dbReference type="PhylomeDB" id="Q7Z7G8"/>
<dbReference type="TreeFam" id="TF323503"/>
<dbReference type="PathwayCommons" id="Q7Z7G8"/>
<dbReference type="SignaLink" id="Q7Z7G8"/>
<dbReference type="SIGNOR" id="Q7Z7G8"/>
<dbReference type="BioGRID-ORCS" id="157680">
    <property type="hits" value="11 hits in 1157 CRISPR screens"/>
</dbReference>
<dbReference type="ChiTaRS" id="VPS13B">
    <property type="organism name" value="human"/>
</dbReference>
<dbReference type="GenomeRNAi" id="157680"/>
<dbReference type="Pharos" id="Q7Z7G8">
    <property type="development level" value="Tbio"/>
</dbReference>
<dbReference type="PRO" id="PR:Q7Z7G8"/>
<dbReference type="Proteomes" id="UP000005640">
    <property type="component" value="Chromosome 8"/>
</dbReference>
<dbReference type="RNAct" id="Q7Z7G8">
    <property type="molecule type" value="protein"/>
</dbReference>
<dbReference type="Bgee" id="ENSG00000132549">
    <property type="expression patterns" value="Expressed in sural nerve and 210 other cell types or tissues"/>
</dbReference>
<dbReference type="ExpressionAtlas" id="Q7Z7G8">
    <property type="expression patterns" value="baseline and differential"/>
</dbReference>
<dbReference type="GO" id="GO:0002080">
    <property type="term" value="C:acrosomal membrane"/>
    <property type="evidence" value="ECO:0000250"/>
    <property type="project" value="UniProtKB"/>
</dbReference>
<dbReference type="GO" id="GO:0033106">
    <property type="term" value="C:cis-Golgi network membrane"/>
    <property type="evidence" value="ECO:0000314"/>
    <property type="project" value="UniProtKB"/>
</dbReference>
<dbReference type="GO" id="GO:0031901">
    <property type="term" value="C:early endosome membrane"/>
    <property type="evidence" value="ECO:0007669"/>
    <property type="project" value="UniProtKB-SubCell"/>
</dbReference>
<dbReference type="GO" id="GO:0033116">
    <property type="term" value="C:endoplasmic reticulum-Golgi intermediate compartment membrane"/>
    <property type="evidence" value="ECO:0000314"/>
    <property type="project" value="UniProtKB"/>
</dbReference>
<dbReference type="GO" id="GO:0000139">
    <property type="term" value="C:Golgi membrane"/>
    <property type="evidence" value="ECO:0000314"/>
    <property type="project" value="UniProtKB"/>
</dbReference>
<dbReference type="GO" id="GO:0005765">
    <property type="term" value="C:lysosomal membrane"/>
    <property type="evidence" value="ECO:0007669"/>
    <property type="project" value="UniProtKB-SubCell"/>
</dbReference>
<dbReference type="GO" id="GO:0055038">
    <property type="term" value="C:recycling endosome membrane"/>
    <property type="evidence" value="ECO:0007669"/>
    <property type="project" value="UniProtKB-SubCell"/>
</dbReference>
<dbReference type="GO" id="GO:0032588">
    <property type="term" value="C:trans-Golgi network membrane"/>
    <property type="evidence" value="ECO:0000314"/>
    <property type="project" value="UniProtKB"/>
</dbReference>
<dbReference type="GO" id="GO:0032266">
    <property type="term" value="F:phosphatidylinositol-3-phosphate binding"/>
    <property type="evidence" value="ECO:0000250"/>
    <property type="project" value="UniProtKB"/>
</dbReference>
<dbReference type="GO" id="GO:0001675">
    <property type="term" value="P:acrosome assembly"/>
    <property type="evidence" value="ECO:0000250"/>
    <property type="project" value="UniProtKB"/>
</dbReference>
<dbReference type="GO" id="GO:0060612">
    <property type="term" value="P:adipose tissue development"/>
    <property type="evidence" value="ECO:0000315"/>
    <property type="project" value="UniProtKB"/>
</dbReference>
<dbReference type="GO" id="GO:0007417">
    <property type="term" value="P:central nervous system development"/>
    <property type="evidence" value="ECO:0000250"/>
    <property type="project" value="UniProtKB"/>
</dbReference>
<dbReference type="GO" id="GO:0021542">
    <property type="term" value="P:dentate gyrus development"/>
    <property type="evidence" value="ECO:0007669"/>
    <property type="project" value="Ensembl"/>
</dbReference>
<dbReference type="GO" id="GO:0007030">
    <property type="term" value="P:Golgi organization"/>
    <property type="evidence" value="ECO:0000315"/>
    <property type="project" value="UniProtKB"/>
</dbReference>
<dbReference type="GO" id="GO:0090168">
    <property type="term" value="P:Golgi reassembly"/>
    <property type="evidence" value="ECO:0000315"/>
    <property type="project" value="UniProtKB"/>
</dbReference>
<dbReference type="GO" id="GO:0060323">
    <property type="term" value="P:head morphogenesis"/>
    <property type="evidence" value="ECO:0007669"/>
    <property type="project" value="Ensembl"/>
</dbReference>
<dbReference type="GO" id="GO:0006869">
    <property type="term" value="P:lipid transport"/>
    <property type="evidence" value="ECO:0007669"/>
    <property type="project" value="UniProtKB-KW"/>
</dbReference>
<dbReference type="GO" id="GO:0036438">
    <property type="term" value="P:maintenance of lens transparency"/>
    <property type="evidence" value="ECO:0000250"/>
    <property type="project" value="UniProtKB"/>
</dbReference>
<dbReference type="GO" id="GO:0007613">
    <property type="term" value="P:memory"/>
    <property type="evidence" value="ECO:0007669"/>
    <property type="project" value="Ensembl"/>
</dbReference>
<dbReference type="GO" id="GO:0035264">
    <property type="term" value="P:multicellular organism growth"/>
    <property type="evidence" value="ECO:0007669"/>
    <property type="project" value="Ensembl"/>
</dbReference>
<dbReference type="GO" id="GO:0007517">
    <property type="term" value="P:muscle organ development"/>
    <property type="evidence" value="ECO:0007669"/>
    <property type="project" value="Ensembl"/>
</dbReference>
<dbReference type="GO" id="GO:0007399">
    <property type="term" value="P:nervous system development"/>
    <property type="evidence" value="ECO:0000315"/>
    <property type="project" value="UniProtKB"/>
</dbReference>
<dbReference type="GO" id="GO:0031175">
    <property type="term" value="P:neuron projection development"/>
    <property type="evidence" value="ECO:0000304"/>
    <property type="project" value="UniProtKB"/>
</dbReference>
<dbReference type="GO" id="GO:0032458">
    <property type="term" value="P:slow endocytic recycling"/>
    <property type="evidence" value="ECO:0000314"/>
    <property type="project" value="UniProtKB"/>
</dbReference>
<dbReference type="GO" id="GO:0035176">
    <property type="term" value="P:social behavior"/>
    <property type="evidence" value="ECO:0007669"/>
    <property type="project" value="Ensembl"/>
</dbReference>
<dbReference type="GO" id="GO:0016192">
    <property type="term" value="P:vesicle-mediated transport"/>
    <property type="evidence" value="ECO:0000315"/>
    <property type="project" value="UniProtKB"/>
</dbReference>
<dbReference type="InterPro" id="IPR056747">
    <property type="entry name" value="VPS13-like_M"/>
</dbReference>
<dbReference type="InterPro" id="IPR026854">
    <property type="entry name" value="VPS13_N"/>
</dbReference>
<dbReference type="InterPro" id="IPR009543">
    <property type="entry name" value="VPS13_VAB"/>
</dbReference>
<dbReference type="InterPro" id="IPR039782">
    <property type="entry name" value="VPS13B"/>
</dbReference>
<dbReference type="PANTHER" id="PTHR12517:SF0">
    <property type="entry name" value="INTERMEMBRANE LIPID TRANSFER PROTEIN VPS13B"/>
    <property type="match status" value="1"/>
</dbReference>
<dbReference type="PANTHER" id="PTHR12517">
    <property type="entry name" value="VACUOLAR PROTEIN SORTING-ASSOCIATED PROTEIN 13B"/>
    <property type="match status" value="1"/>
</dbReference>
<dbReference type="Pfam" id="PF25033">
    <property type="entry name" value="VPS13_M"/>
    <property type="match status" value="1"/>
</dbReference>
<dbReference type="Pfam" id="PF12624">
    <property type="entry name" value="VPS13_N"/>
    <property type="match status" value="1"/>
</dbReference>
<dbReference type="Pfam" id="PF25036">
    <property type="entry name" value="VPS13_VAB"/>
    <property type="match status" value="1"/>
</dbReference>
<reference key="1">
    <citation type="journal article" date="2003" name="Am. J. Hum. Genet.">
        <title>Cohen syndrome is caused by mutations in a novel gene, COH1, encoding a transmembrane protein with a presumed role in vesicle-mediated sorting and intracellular protein transport.</title>
        <authorList>
            <person name="Kolehmainen J."/>
            <person name="Black G.C.M."/>
            <person name="Saarinen A."/>
            <person name="Chandler K."/>
            <person name="Clayton-Smith J."/>
            <person name="Traeskelin A.-L."/>
            <person name="Perveen R."/>
            <person name="Kivitie-Kallio S."/>
            <person name="Norio R."/>
            <person name="Warburg M."/>
            <person name="Fryns J.-P."/>
            <person name="de la Chapelle A."/>
            <person name="Lehesjoki A.-E."/>
        </authorList>
    </citation>
    <scope>NUCLEOTIDE SEQUENCE [MRNA] (ISOFORMS 1; 2; 3; 4 AND 5)</scope>
    <scope>TISSUE SPECIFICITY</scope>
    <scope>VARIANT 413-TYR--LEU-415 DEL (ISOFORM 5)</scope>
    <scope>VARIANT COH1 ARG-2193</scope>
    <source>
        <tissue>Lymphoblast</tissue>
    </source>
</reference>
<reference key="2">
    <citation type="journal article" date="2004" name="Genomics">
        <title>Analysis of the human VPS13 gene family.</title>
        <authorList>
            <person name="Velayos-Baeza A."/>
            <person name="Vettori A."/>
            <person name="Copley R.R."/>
            <person name="Dobson-Stone C."/>
            <person name="Monaco A.P."/>
        </authorList>
    </citation>
    <scope>NUCLEOTIDE SEQUENCE [MRNA] (ISOFORMS 1 AND 2)</scope>
    <source>
        <tissue>Lymphoblast</tissue>
    </source>
</reference>
<reference key="3">
    <citation type="journal article" date="2004" name="Nat. Genet.">
        <title>Complete sequencing and characterization of 21,243 full-length human cDNAs.</title>
        <authorList>
            <person name="Ota T."/>
            <person name="Suzuki Y."/>
            <person name="Nishikawa T."/>
            <person name="Otsuki T."/>
            <person name="Sugiyama T."/>
            <person name="Irie R."/>
            <person name="Wakamatsu A."/>
            <person name="Hayashi K."/>
            <person name="Sato H."/>
            <person name="Nagai K."/>
            <person name="Kimura K."/>
            <person name="Makita H."/>
            <person name="Sekine M."/>
            <person name="Obayashi M."/>
            <person name="Nishi T."/>
            <person name="Shibahara T."/>
            <person name="Tanaka T."/>
            <person name="Ishii S."/>
            <person name="Yamamoto J."/>
            <person name="Saito K."/>
            <person name="Kawai Y."/>
            <person name="Isono Y."/>
            <person name="Nakamura Y."/>
            <person name="Nagahari K."/>
            <person name="Murakami K."/>
            <person name="Yasuda T."/>
            <person name="Iwayanagi T."/>
            <person name="Wagatsuma M."/>
            <person name="Shiratori A."/>
            <person name="Sudo H."/>
            <person name="Hosoiri T."/>
            <person name="Kaku Y."/>
            <person name="Kodaira H."/>
            <person name="Kondo H."/>
            <person name="Sugawara M."/>
            <person name="Takahashi M."/>
            <person name="Kanda K."/>
            <person name="Yokoi T."/>
            <person name="Furuya T."/>
            <person name="Kikkawa E."/>
            <person name="Omura Y."/>
            <person name="Abe K."/>
            <person name="Kamihara K."/>
            <person name="Katsuta N."/>
            <person name="Sato K."/>
            <person name="Tanikawa M."/>
            <person name="Yamazaki M."/>
            <person name="Ninomiya K."/>
            <person name="Ishibashi T."/>
            <person name="Yamashita H."/>
            <person name="Murakawa K."/>
            <person name="Fujimori K."/>
            <person name="Tanai H."/>
            <person name="Kimata M."/>
            <person name="Watanabe M."/>
            <person name="Hiraoka S."/>
            <person name="Chiba Y."/>
            <person name="Ishida S."/>
            <person name="Ono Y."/>
            <person name="Takiguchi S."/>
            <person name="Watanabe S."/>
            <person name="Yosida M."/>
            <person name="Hotuta T."/>
            <person name="Kusano J."/>
            <person name="Kanehori K."/>
            <person name="Takahashi-Fujii A."/>
            <person name="Hara H."/>
            <person name="Tanase T.-O."/>
            <person name="Nomura Y."/>
            <person name="Togiya S."/>
            <person name="Komai F."/>
            <person name="Hara R."/>
            <person name="Takeuchi K."/>
            <person name="Arita M."/>
            <person name="Imose N."/>
            <person name="Musashino K."/>
            <person name="Yuuki H."/>
            <person name="Oshima A."/>
            <person name="Sasaki N."/>
            <person name="Aotsuka S."/>
            <person name="Yoshikawa Y."/>
            <person name="Matsunawa H."/>
            <person name="Ichihara T."/>
            <person name="Shiohata N."/>
            <person name="Sano S."/>
            <person name="Moriya S."/>
            <person name="Momiyama H."/>
            <person name="Satoh N."/>
            <person name="Takami S."/>
            <person name="Terashima Y."/>
            <person name="Suzuki O."/>
            <person name="Nakagawa S."/>
            <person name="Senoh A."/>
            <person name="Mizoguchi H."/>
            <person name="Goto Y."/>
            <person name="Shimizu F."/>
            <person name="Wakebe H."/>
            <person name="Hishigaki H."/>
            <person name="Watanabe T."/>
            <person name="Sugiyama A."/>
            <person name="Takemoto M."/>
            <person name="Kawakami B."/>
            <person name="Yamazaki M."/>
            <person name="Watanabe K."/>
            <person name="Kumagai A."/>
            <person name="Itakura S."/>
            <person name="Fukuzumi Y."/>
            <person name="Fujimori Y."/>
            <person name="Komiyama M."/>
            <person name="Tashiro H."/>
            <person name="Tanigami A."/>
            <person name="Fujiwara T."/>
            <person name="Ono T."/>
            <person name="Yamada K."/>
            <person name="Fujii Y."/>
            <person name="Ozaki K."/>
            <person name="Hirao M."/>
            <person name="Ohmori Y."/>
            <person name="Kawabata A."/>
            <person name="Hikiji T."/>
            <person name="Kobatake N."/>
            <person name="Inagaki H."/>
            <person name="Ikema Y."/>
            <person name="Okamoto S."/>
            <person name="Okitani R."/>
            <person name="Kawakami T."/>
            <person name="Noguchi S."/>
            <person name="Itoh T."/>
            <person name="Shigeta K."/>
            <person name="Senba T."/>
            <person name="Matsumura K."/>
            <person name="Nakajima Y."/>
            <person name="Mizuno T."/>
            <person name="Morinaga M."/>
            <person name="Sasaki M."/>
            <person name="Togashi T."/>
            <person name="Oyama M."/>
            <person name="Hata H."/>
            <person name="Watanabe M."/>
            <person name="Komatsu T."/>
            <person name="Mizushima-Sugano J."/>
            <person name="Satoh T."/>
            <person name="Shirai Y."/>
            <person name="Takahashi Y."/>
            <person name="Nakagawa K."/>
            <person name="Okumura K."/>
            <person name="Nagase T."/>
            <person name="Nomura N."/>
            <person name="Kikuchi H."/>
            <person name="Masuho Y."/>
            <person name="Yamashita R."/>
            <person name="Nakai K."/>
            <person name="Yada T."/>
            <person name="Nakamura Y."/>
            <person name="Ohara O."/>
            <person name="Isogai T."/>
            <person name="Sugano S."/>
        </authorList>
    </citation>
    <scope>NUCLEOTIDE SEQUENCE [LARGE SCALE MRNA] (ISOFORM 5)</scope>
    <scope>NUCLEOTIDE SEQUENCE [LARGE SCALE MRNA] OF 518-1522 (ISOFORM 6)</scope>
    <scope>VARIANT 413-TYR--LEU-415 DEL (ISOFORM 5)</scope>
    <source>
        <tissue>Brain</tissue>
    </source>
</reference>
<reference key="4">
    <citation type="journal article" date="2006" name="Nature">
        <title>DNA sequence and analysis of human chromosome 8.</title>
        <authorList>
            <person name="Nusbaum C."/>
            <person name="Mikkelsen T.S."/>
            <person name="Zody M.C."/>
            <person name="Asakawa S."/>
            <person name="Taudien S."/>
            <person name="Garber M."/>
            <person name="Kodira C.D."/>
            <person name="Schueler M.G."/>
            <person name="Shimizu A."/>
            <person name="Whittaker C.A."/>
            <person name="Chang J.L."/>
            <person name="Cuomo C.A."/>
            <person name="Dewar K."/>
            <person name="FitzGerald M.G."/>
            <person name="Yang X."/>
            <person name="Allen N.R."/>
            <person name="Anderson S."/>
            <person name="Asakawa T."/>
            <person name="Blechschmidt K."/>
            <person name="Bloom T."/>
            <person name="Borowsky M.L."/>
            <person name="Butler J."/>
            <person name="Cook A."/>
            <person name="Corum B."/>
            <person name="DeArellano K."/>
            <person name="DeCaprio D."/>
            <person name="Dooley K.T."/>
            <person name="Dorris L. III"/>
            <person name="Engels R."/>
            <person name="Gloeckner G."/>
            <person name="Hafez N."/>
            <person name="Hagopian D.S."/>
            <person name="Hall J.L."/>
            <person name="Ishikawa S.K."/>
            <person name="Jaffe D.B."/>
            <person name="Kamat A."/>
            <person name="Kudoh J."/>
            <person name="Lehmann R."/>
            <person name="Lokitsang T."/>
            <person name="Macdonald P."/>
            <person name="Major J.E."/>
            <person name="Matthews C.D."/>
            <person name="Mauceli E."/>
            <person name="Menzel U."/>
            <person name="Mihalev A.H."/>
            <person name="Minoshima S."/>
            <person name="Murayama Y."/>
            <person name="Naylor J.W."/>
            <person name="Nicol R."/>
            <person name="Nguyen C."/>
            <person name="O'Leary S.B."/>
            <person name="O'Neill K."/>
            <person name="Parker S.C.J."/>
            <person name="Polley A."/>
            <person name="Raymond C.K."/>
            <person name="Reichwald K."/>
            <person name="Rodriguez J."/>
            <person name="Sasaki T."/>
            <person name="Schilhabel M."/>
            <person name="Siddiqui R."/>
            <person name="Smith C.L."/>
            <person name="Sneddon T.P."/>
            <person name="Talamas J.A."/>
            <person name="Tenzin P."/>
            <person name="Topham K."/>
            <person name="Venkataraman V."/>
            <person name="Wen G."/>
            <person name="Yamazaki S."/>
            <person name="Young S.K."/>
            <person name="Zeng Q."/>
            <person name="Zimmer A.R."/>
            <person name="Rosenthal A."/>
            <person name="Birren B.W."/>
            <person name="Platzer M."/>
            <person name="Shimizu N."/>
            <person name="Lander E.S."/>
        </authorList>
    </citation>
    <scope>NUCLEOTIDE SEQUENCE [LARGE SCALE GENOMIC DNA]</scope>
</reference>
<reference key="5">
    <citation type="journal article" date="1998" name="DNA Res.">
        <title>Prediction of the coding sequences of unidentified human genes. IX. The complete sequences of 100 new cDNA clones from brain which can code for large proteins in vitro.</title>
        <authorList>
            <person name="Nagase T."/>
            <person name="Ishikawa K."/>
            <person name="Miyajima N."/>
            <person name="Tanaka A."/>
            <person name="Kotani H."/>
            <person name="Nomura N."/>
            <person name="Ohara O."/>
        </authorList>
    </citation>
    <scope>NUCLEOTIDE SEQUENCE [LARGE SCALE MRNA] OF 2386-4022</scope>
    <source>
        <tissue>Brain</tissue>
    </source>
</reference>
<reference key="6">
    <citation type="journal article" date="2009" name="Sci. Signal.">
        <title>Quantitative phosphoproteomic analysis of T cell receptor signaling reveals system-wide modulation of protein-protein interactions.</title>
        <authorList>
            <person name="Mayya V."/>
            <person name="Lundgren D.H."/>
            <person name="Hwang S.-I."/>
            <person name="Rezaul K."/>
            <person name="Wu L."/>
            <person name="Eng J.K."/>
            <person name="Rodionov V."/>
            <person name="Han D.K."/>
        </authorList>
    </citation>
    <scope>IDENTIFICATION BY MASS SPECTROMETRY [LARGE SCALE ANALYSIS]</scope>
    <source>
        <tissue>Leukemic T-cell</tissue>
    </source>
</reference>
<reference key="7">
    <citation type="journal article" date="2013" name="J. Proteome Res.">
        <title>Toward a comprehensive characterization of a human cancer cell phosphoproteome.</title>
        <authorList>
            <person name="Zhou H."/>
            <person name="Di Palma S."/>
            <person name="Preisinger C."/>
            <person name="Peng M."/>
            <person name="Polat A.N."/>
            <person name="Heck A.J."/>
            <person name="Mohammed S."/>
        </authorList>
    </citation>
    <scope>PHOSPHORYLATION [LARGE SCALE ANALYSIS] AT SER-414; SER-999; SER-1002; SER-1033 AND SER-1815</scope>
    <scope>IDENTIFICATION BY MASS SPECTROMETRY [LARGE SCALE ANALYSIS]</scope>
    <source>
        <tissue>Cervix carcinoma</tissue>
        <tissue>Erythroleukemia</tissue>
    </source>
</reference>
<reference key="8">
    <citation type="journal article" date="2015" name="J. Biol. Chem.">
        <title>Cohen syndrome-associated protein COH1 physically and functionally interacts with the small GTPase RAB6 at the Golgi complex and directs neurite outgrowth.</title>
        <authorList>
            <person name="Seifert W."/>
            <person name="Kuehnisch J."/>
            <person name="Maritzen T."/>
            <person name="Lommatzsch S."/>
            <person name="Hennies H.C."/>
            <person name="Bachmann S."/>
            <person name="Horn D."/>
            <person name="Haucke V."/>
        </authorList>
    </citation>
    <scope>FUNCTION</scope>
    <scope>INTERACTION WITH RAB6A AND RAB6B</scope>
    <scope>SUBCELLULAR LOCATION</scope>
</reference>
<reference key="9">
    <citation type="journal article" date="2019" name="Nat. Commun.">
        <title>SNAREs define targeting specificity of trafficking vesicles by combinatorial interaction with tethering factors.</title>
        <authorList>
            <person name="Koike S."/>
            <person name="Jahn R."/>
        </authorList>
    </citation>
    <scope>FUNCTION</scope>
</reference>
<reference key="10">
    <citation type="journal article" date="2020" name="Mol. Brain">
        <title>Autophagy pathway upregulation in a human iPSC-derived neuronal model of Cohen syndrome with VPS13B missense mutations.</title>
        <authorList>
            <person name="Lee Y.K."/>
            <person name="Lee S.K."/>
            <person name="Choi S."/>
            <person name="Huh Y.H."/>
            <person name="Kwak J.H."/>
            <person name="Lee Y.S."/>
            <person name="Jang D.J."/>
            <person name="Lee J.H."/>
            <person name="Lee K."/>
            <person name="Kaang B.K."/>
            <person name="Lim C.S."/>
            <person name="Lee J.A."/>
        </authorList>
    </citation>
    <scope>FUNCTION</scope>
</reference>
<reference key="11">
    <citation type="journal article" date="2004" name="Am. J. Hum. Genet.">
        <title>Delineation of Cohen syndrome following a large-scale genotype-phenotype screen.</title>
        <authorList>
            <person name="Kolehmainen J."/>
            <person name="Wilkinson R."/>
            <person name="Lehesjoki A.-E."/>
            <person name="Chandler K."/>
            <person name="Kivitie-Kallio S."/>
            <person name="Clayton-Smith J."/>
            <person name="Traeskelin A.-L."/>
            <person name="Waris L."/>
            <person name="Saarinen A."/>
            <person name="Khan J."/>
            <person name="Gross-Tsur V."/>
            <person name="Traboulsi E.I."/>
            <person name="Warburg M."/>
            <person name="Fryns J.-P."/>
            <person name="Norio R."/>
            <person name="Black G.C.M."/>
            <person name="Manson F.D.C."/>
        </authorList>
    </citation>
    <scope>VARIANT COH1 SER-2993</scope>
</reference>
<reference key="12">
    <citation type="journal article" date="2004" name="Am. J. Hum. Genet.">
        <title>Allelic heterogeneity in the COH1 gene explains clinical variability in Cohen syndrome.</title>
        <authorList>
            <person name="Hennies H.C."/>
            <person name="Rauch A."/>
            <person name="Seifert W."/>
            <person name="Schumi C."/>
            <person name="Moser E."/>
            <person name="Al-Taji E."/>
            <person name="Tariverdian G."/>
            <person name="Chrzanowska K.H."/>
            <person name="Krajewska-Walasek M."/>
            <person name="Rajab A."/>
            <person name="Giugliani R."/>
            <person name="Neumann T.E."/>
            <person name="Eckl K.M."/>
            <person name="Karbasiyan M."/>
            <person name="Reis A."/>
            <person name="Horn D."/>
        </authorList>
    </citation>
    <scope>VARIANTS COH1 CYS-2341 AND ASP-2645</scope>
</reference>
<reference key="13">
    <citation type="journal article" date="2004" name="Am. J. Med. Genet. A">
        <title>Cohen syndrome in the Ohio Amish.</title>
        <authorList>
            <person name="Falk M.J."/>
            <person name="Feiler H.S."/>
            <person name="Neilson D.E."/>
            <person name="Maxwell K."/>
            <person name="Lee J.V."/>
            <person name="Segall S.K."/>
            <person name="Robin N.H."/>
            <person name="Wilhelmsen K.C."/>
            <person name="Traeskelin A.-L."/>
            <person name="Kolehmainen J."/>
            <person name="Lehesjoki A.-E."/>
            <person name="Wiznitzer M."/>
            <person name="Warman M.L."/>
        </authorList>
    </citation>
    <scope>VARIANT COH1 THR-2820</scope>
</reference>
<reference key="14">
    <citation type="journal article" date="2006" name="J. Med. Genet.">
        <title>Mutational spectrum of COH1 and clinical heterogeneity in Cohen syndrome.</title>
        <authorList>
            <person name="Seifert W."/>
            <person name="Holder-Espinasse M."/>
            <person name="Spranger S."/>
            <person name="Hoeltzenbein M."/>
            <person name="Rossier E."/>
            <person name="Dollfus H."/>
            <person name="Lacombe D."/>
            <person name="Verloes A."/>
            <person name="Chrzanowska K.H."/>
            <person name="Maegawa G.H.B."/>
            <person name="Chitayat D."/>
            <person name="Kotzot D."/>
            <person name="Huhle D."/>
            <person name="Meinecke P."/>
            <person name="Albrecht B."/>
            <person name="Mathijssen I."/>
            <person name="Leheup B."/>
            <person name="Raile K."/>
            <person name="Hennies H.C."/>
            <person name="Horn D."/>
        </authorList>
    </citation>
    <scope>VARIANTS COH1 1739-GLU--GLN-1744 DEL AND LEU-2773</scope>
    <scope>VARIANTS THR-829; ILE-866; VAL-1994; CYS-2822 AND ARG-3142</scope>
</reference>
<reference key="15">
    <citation type="journal article" date="2006" name="Science">
        <title>The consensus coding sequences of human breast and colorectal cancers.</title>
        <authorList>
            <person name="Sjoeblom T."/>
            <person name="Jones S."/>
            <person name="Wood L.D."/>
            <person name="Parsons D.W."/>
            <person name="Lin J."/>
            <person name="Barber T.D."/>
            <person name="Mandelker D."/>
            <person name="Leary R.J."/>
            <person name="Ptak J."/>
            <person name="Silliman N."/>
            <person name="Szabo S."/>
            <person name="Buckhaults P."/>
            <person name="Farrell C."/>
            <person name="Meeh P."/>
            <person name="Markowitz S.D."/>
            <person name="Willis J."/>
            <person name="Dawson D."/>
            <person name="Willson J.K.V."/>
            <person name="Gazdar A.F."/>
            <person name="Hartigan J."/>
            <person name="Wu L."/>
            <person name="Liu C."/>
            <person name="Parmigiani G."/>
            <person name="Park B.H."/>
            <person name="Bachman K.E."/>
            <person name="Papadopoulos N."/>
            <person name="Vogelstein B."/>
            <person name="Kinzler K.W."/>
            <person name="Velculescu V.E."/>
        </authorList>
    </citation>
    <scope>VARIANT [LARGE SCALE ANALYSIS] VAL-3001</scope>
</reference>
<reference key="16">
    <citation type="journal article" date="2009" name="Eur. J. Hum. Genet.">
        <title>A novel VPS13B mutation in two brothers with Cohen syndrome, cutis verticis gyrata and sensorineural deafness.</title>
        <authorList>
            <person name="Megarbane A."/>
            <person name="Slim R."/>
            <person name="Nuernberg G."/>
            <person name="Ebermann I."/>
            <person name="Nuernberg P."/>
            <person name="Bolz H.J."/>
        </authorList>
    </citation>
    <scope>INVOLVEMENT IN COH1</scope>
</reference>
<reference key="17">
    <citation type="journal article" date="2009" name="Hum. Mutat.">
        <title>Expanded mutational spectrum in Cohen syndrome, tissue expression, and transcript variants of COH1.</title>
        <authorList>
            <person name="Seifert W."/>
            <person name="Holder-Espinasse M."/>
            <person name="Kuehnisch J."/>
            <person name="Kahrizi K."/>
            <person name="Tzschach A."/>
            <person name="Garshasbi M."/>
            <person name="Najmabadi H."/>
            <person name="Walter Kuss A."/>
            <person name="Kress W."/>
            <person name="Laureys G."/>
            <person name="Loeys B."/>
            <person name="Brilstra E."/>
            <person name="Mancini G.M.S."/>
            <person name="Dollfus H."/>
            <person name="Dahan K."/>
            <person name="Apse K."/>
            <person name="Hennies H.C."/>
            <person name="Horn D."/>
        </authorList>
    </citation>
    <scope>VARIANT COH1 LEU-1494 DEL</scope>
    <scope>TISSUE SPECIFICITY</scope>
</reference>
<reference key="18">
    <citation type="journal article" date="2009" name="Hum. Mutat.">
        <title>Deletions in the VPS13B (COH1) gene as a cause of Cohen syndrome.</title>
        <authorList>
            <person name="Balikova I."/>
            <person name="Lehesjoki A.E."/>
            <person name="de Ravel T.J."/>
            <person name="Thienpont B."/>
            <person name="Chandler K.E."/>
            <person name="Clayton-Smith J."/>
            <person name="Traeskelin A.L."/>
            <person name="Fryns J.P."/>
            <person name="Vermeesch J.R."/>
        </authorList>
    </citation>
    <scope>INVOLVEMENT IN COH1</scope>
</reference>
<reference key="19">
    <citation type="journal article" date="2011" name="J. Biol. Chem.">
        <title>Cohen syndrome-associated protein, COH1, is a novel, giant Golgi matrix protein required for Golgi integrity.</title>
        <authorList>
            <person name="Seifert W."/>
            <person name="Kuehnisch J."/>
            <person name="Maritzen T."/>
            <person name="Horn D."/>
            <person name="Haucke V."/>
            <person name="Hennies H.C."/>
        </authorList>
    </citation>
    <scope>CHARACTERIZATION OF VARIANT COH1 2839-ARG--PRO-4022 DEL</scope>
    <scope>FUNCTION</scope>
    <scope>SUBCELLULAR LOCATION</scope>
</reference>
<reference key="20">
    <citation type="journal article" date="2012" name="N. Engl. J. Med.">
        <title>Diagnostic exome sequencing in persons with severe intellectual disability.</title>
        <authorList>
            <person name="de Ligt J."/>
            <person name="Willemsen M.H."/>
            <person name="van Bon B.W."/>
            <person name="Kleefstra T."/>
            <person name="Yntema H.G."/>
            <person name="Kroes T."/>
            <person name="Vulto-van Silfhout A.T."/>
            <person name="Koolen D.A."/>
            <person name="de Vries P."/>
            <person name="Gilissen C."/>
            <person name="del Rosario M."/>
            <person name="Hoischen A."/>
            <person name="Scheffer H."/>
            <person name="de Vries B.B."/>
            <person name="Brunner H.G."/>
            <person name="Veltman J.A."/>
            <person name="Vissers L.E."/>
        </authorList>
    </citation>
    <scope>VARIANT ILE-2481</scope>
</reference>
<reference key="21">
    <citation type="journal article" date="2013" name="Eur. J. Hum. Genet.">
        <title>Changing facial phenotype in Cohen syndrome: towards clues for an earlier diagnosis.</title>
        <authorList>
            <person name="El Chehadeh-Djebbar S."/>
            <person name="Blair E."/>
            <person name="Holder-Espinasse M."/>
            <person name="Moncla A."/>
            <person name="Frances A.M."/>
            <person name="Rio M."/>
            <person name="Debray F.G."/>
            <person name="Rump P."/>
            <person name="Masurel-Paulet A."/>
            <person name="Gigot N."/>
            <person name="Callier P."/>
            <person name="Duplomb L."/>
            <person name="Aral B."/>
            <person name="Huet F."/>
            <person name="Thauvin-Robinet C."/>
            <person name="Faivre L."/>
        </authorList>
    </citation>
    <scope>CHARACTERIZATION OF VARIANTS COH1 146-ARG--PRO-4022 DEL; 336-GLN--PRO-4022 DEL; 579-ILE--PRO-4022 DEL; 692-ARG--PRO-4022 DEL; 1143-ARG--PRO-4022 DEL; 2548-PHE--PRO-4022 DEL; 2839-ARG--PRO-4022 DEL AND 3627-THR--HIS-3633 DELINS ILE</scope>
</reference>
<reference key="22">
    <citation type="journal article" date="2014" name="Hum. Mol. Genet.">
        <title>Cohen syndrome is associated with major glycosylation defects.</title>
        <authorList>
            <person name="Duplomb L."/>
            <person name="Duvet S."/>
            <person name="Picot D."/>
            <person name="Jego G."/>
            <person name="El Chehadeh-Djebbar S."/>
            <person name="Marle N."/>
            <person name="Gigot N."/>
            <person name="Aral B."/>
            <person name="Carmignac V."/>
            <person name="Thevenon J."/>
            <person name="Lopez E."/>
            <person name="Riviere J.B."/>
            <person name="Klein A."/>
            <person name="Philippe C."/>
            <person name="Droin N."/>
            <person name="Blair E."/>
            <person name="Girodon F."/>
            <person name="Donadieu J."/>
            <person name="Bellanne-Chantelot C."/>
            <person name="Delva L."/>
            <person name="Michalski J.C."/>
            <person name="Solary E."/>
            <person name="Faivre L."/>
            <person name="Foulquier F."/>
            <person name="Thauvin-Robinet C."/>
        </authorList>
    </citation>
    <scope>CHARACTERIZATION OF VARIANTS COH1 692-ARG--PRO-4022 DEL; 1143-ARG--PRO-4022 DEL; 2548-PHE--PRO-4022 DEL; 2839-ARG--PRO-4022 DEL AND 3627-THR--HIS-3633 DELINS ILE</scope>
    <scope>FUNCTION</scope>
</reference>
<reference key="23">
    <citation type="journal article" date="2015" name="Hum. Mol. Genet.">
        <title>Insulin response dysregulation explains abnormal fat storage and increased risk of diabetes mellitus type 2 in Cohen Syndrome.</title>
        <authorList>
            <person name="Limoge F."/>
            <person name="Faivre L."/>
            <person name="Gautier T."/>
            <person name="Petit J.M."/>
            <person name="Gautier E."/>
            <person name="Masson D."/>
            <person name="Jego G."/>
            <person name="El Chehadeh-Djebbar S."/>
            <person name="Marle N."/>
            <person name="Carmignac V."/>
            <person name="Deckert V."/>
            <person name="Brindisi M.C."/>
            <person name="Edery P."/>
            <person name="Ghoumid J."/>
            <person name="Blair E."/>
            <person name="Lagrost L."/>
            <person name="Thauvin-Robinet C."/>
            <person name="Duplomb L."/>
        </authorList>
    </citation>
    <scope>CHARACTERIZATION OF VARIANTS COH1 146-ARG--PRO-4022 DEL; 579-ILE--PRO-4022 DEL; 692-ARG--PRO-4022 DEL; 971-ARG--PRO-4022 DEL; 1143-ARG--PRO-4022 DEL; 1227-TYR--PRO-4022 DEL AND 3627-THR--HIS-3633 DELINS ILE</scope>
    <scope>FUNCTION</scope>
</reference>
<reference key="24">
    <citation type="journal article" date="2017" name="BMC Med. Genet.">
        <title>First case report of Cohen syndrome in the Tunisian population caused by VPS13B mutations.</title>
        <authorList>
            <person name="Rejeb I."/>
            <person name="Jilani H."/>
            <person name="Elaribi Y."/>
            <person name="Hizem S."/>
            <person name="Hila L."/>
            <person name="Zillahrdt J.L."/>
            <person name="Chelly J."/>
            <person name="Benjemaa L."/>
        </authorList>
    </citation>
    <scope>INVOLVEMENT IN COH1</scope>
</reference>
<reference key="25">
    <citation type="journal article" date="2019" name="BMC Med. Genet.">
        <title>Case report: two novel VPS13B mutations in a Chinese family with Cohen syndrome and hyperlinear palms.</title>
        <authorList>
            <person name="Zhao S."/>
            <person name="Luo Z."/>
            <person name="Xiao Z."/>
            <person name="Li L."/>
            <person name="Zhao R."/>
            <person name="Yang Y."/>
            <person name="Zhong Y."/>
        </authorList>
    </citation>
    <scope>VARIANT COH1 3282-LYS--PRO-4022 DEL</scope>
</reference>
<reference key="26">
    <citation type="journal article" date="2020" name="Acta Ophthalmol.">
        <title>Ophthalmic features of retinitis pigmentosa in Cohen syndrome caused by pathogenic variants in the VPS13B gene.</title>
        <authorList>
            <person name="Nasser F."/>
            <person name="Kurtenbach A."/>
            <person name="Biskup S."/>
            <person name="Weidensee S."/>
            <person name="Kohl S."/>
            <person name="Zrenner E."/>
        </authorList>
    </citation>
    <scope>VARIANT COH1 2704-TYR--PRO-4022 DEL</scope>
</reference>
<reference key="27">
    <citation type="journal article" date="2020" name="Am. J. Med. Genet. A">
        <title>A novel homozygous nonsense mutation of VPS13B associated with previously unreported features of Cohen syndrome.</title>
        <authorList>
            <person name="Koehler K."/>
            <person name="Schuelke M."/>
            <person name="Hell A.K."/>
            <person name="Schittkowski M."/>
            <person name="Huebner A."/>
            <person name="Brockmann K."/>
        </authorList>
    </citation>
    <scope>VARIANT COH1 21-LEU--PRO-4022 DEL</scope>
</reference>
<reference key="28">
    <citation type="journal article" date="2020" name="BMC Med. Genet.">
        <title>A novel VPS13B mutation in Cohen syndrome: a case report and review of literature.</title>
        <authorList>
            <person name="Momtazmanesh S."/>
            <person name="Rayzan E."/>
            <person name="Shahkarami S."/>
            <person name="Rohlfs M."/>
            <person name="Klein C."/>
            <person name="Rezaei N."/>
        </authorList>
    </citation>
    <scope>INVOLVEMENT IN COH1</scope>
</reference>
<reference key="29">
    <citation type="journal article" date="2020" name="Brain Dev.">
        <title>Homozygosity mapping and whole exome sequencing provide exact diagnosis of Cohen syndrome in a Saudi family.</title>
        <authorList>
            <person name="Hashmi J.A."/>
            <person name="Fadhli F."/>
            <person name="Almatrafi A."/>
            <person name="Afzal S."/>
            <person name="Ramzan K."/>
            <person name="Thiele H."/>
            <person name="Nuernberg P."/>
            <person name="Basit S."/>
        </authorList>
    </citation>
    <scope>INVOLVEMENT IN COH1</scope>
</reference>
<reference key="30">
    <citation type="journal article" date="2020" name="Eur. J. Med. Genet.">
        <title>An intronic splice site alteration in combination with a large deletion affecting VPS13B (COH1) causes Cohen syndrome.</title>
        <authorList>
            <person name="Boschann F."/>
            <person name="Fischer-Zirnsak B."/>
            <person name="Wienker T.F."/>
            <person name="Holtgrewe M."/>
            <person name="Seelow D."/>
            <person name="Eichhorn B."/>
            <person name="Doehnert S."/>
            <person name="Fahsold R."/>
            <person name="Horn D."/>
            <person name="Graul-Neumann L.M."/>
        </authorList>
    </citation>
    <scope>INVOLVEMENT IN COH1</scope>
</reference>
<reference key="31">
    <citation type="journal article" date="2020" name="J. Clin. Med.">
        <title>Cohen Syndrome Patient iPSC-Derived Neurospheres and Forebrain-Like Glutamatergic Neurons Reveal Reduced Proliferation of Neural Progenitor Cells and Altered Expression of Synapse Genes.</title>
        <authorList>
            <person name="Lee Y.K."/>
            <person name="Hwang S.K."/>
            <person name="Lee S.K."/>
            <person name="Yang J.E."/>
            <person name="Kwak J.H."/>
            <person name="Seo H."/>
            <person name="Ahn H."/>
            <person name="Lee Y.S."/>
            <person name="Kim J."/>
            <person name="Lim C.S."/>
            <person name="Kaang B.K."/>
            <person name="Lee J.H."/>
            <person name="Lee J.A."/>
            <person name="Lee K."/>
        </authorList>
    </citation>
    <scope>VARIANT COH1 413-TYR--LEU-415 DEL (ISOFORM 5)</scope>
    <scope>VARIANT COH1 MET-3445</scope>
    <scope>FUNCTION</scope>
</reference>
<reference key="32">
    <citation type="journal article" date="2020" name="J. Mol. Neurosci.">
        <title>Mutations in the VPS13B Gene in Iranian Patients with Different Phenotypes of Cohen Syndrome.</title>
        <authorList>
            <person name="Alipour N."/>
            <person name="Salehpour S."/>
            <person name="Tonekaboni S.H."/>
            <person name="Rostami M."/>
            <person name="Bahari S."/>
            <person name="Yassaee V."/>
            <person name="Miryounesi M."/>
            <person name="Ghafouri-Fard S."/>
        </authorList>
    </citation>
    <scope>INVOLVEMENT IN COH1</scope>
</reference>
<reference key="33">
    <citation type="journal article" date="2020" name="J. Mol. Neurosci.">
        <title>Whole Exome Sequencing Identifies a Novel Homozygous Duplication Mutation in the VPS13B Gene in an Indian Family with Cohen Syndrome.</title>
        <authorList>
            <person name="Kaushik P."/>
            <person name="Mahajan N."/>
            <person name="Girimaji S.C."/>
            <person name="Kumar A."/>
        </authorList>
    </citation>
    <scope>INVOLVEMENT IN COH1</scope>
</reference>
<reference key="34">
    <citation type="journal article" date="2021" name="Ann. Med.">
        <title>A case of a Jordanian male twin with Cohen's syndrome, with genetic analysis and muscle biopsy; case report.</title>
        <authorList>
            <person name="Ghzawi A."/>
            <person name="Hirbawi H."/>
            <person name="Negida A."/>
            <person name="Abu-Farsakh H."/>
        </authorList>
    </citation>
    <scope>VARIANT COH1 2067-LEU--PRO-4022 DEL</scope>
</reference>
<reference key="35">
    <citation type="journal article" date="2021" name="Case Rep. Immunol.">
        <title>A Novel Mutation in the VPS13B Gene in a Cohen Syndrome Patient with Positive Antiphospholipid Antibodies.</title>
        <authorList>
            <person name="Dehghan R."/>
            <person name="Behnam M."/>
            <person name="Moafi A."/>
            <person name="Salehi M."/>
        </authorList>
    </citation>
    <scope>VARIANT COH1 2900-GLU--PRO-4022 DEL</scope>
</reference>
<reference key="36">
    <citation type="journal article" date="2021" name="Clin. Case Rep.">
        <title>A VPS13B mutation in Cohen syndrome presented with petechiae: An unusual presentation.</title>
        <authorList>
            <person name="Razavi A."/>
            <person name="Jafarpour H."/>
            <person name="Khosravi M.R."/>
            <person name="Abbasi G."/>
            <person name="Dabbaghzadeh A."/>
        </authorList>
    </citation>
    <scope>INVOLVEMENT IN COH1</scope>
</reference>
<reference key="37">
    <citation type="journal article" date="2021" name="Front. Pediatr.">
        <title>A Novel Homozygous VPS13B Splice-Site Mutation Causing the Skipping of Exon 38 in a Chinese Family With Cohen Syndrome.</title>
        <authorList>
            <person name="Li L."/>
            <person name="Bu X."/>
            <person name="Ji Y."/>
            <person name="Tan P."/>
            <person name="Liu S."/>
        </authorList>
    </citation>
    <scope>INVOLVEMENT IN COH1</scope>
</reference>
<reference key="38">
    <citation type="journal article" date="2021" name="J. Mol. Neurosci.">
        <title>Functional Analysis of a Compound Heterozygous Mutation in the VPS13B Gene in a Chinese Pedigree with Cohen Syndrome.</title>
        <authorList>
            <person name="Lou G."/>
            <person name="Ke Y."/>
            <person name="Zhang Y."/>
            <person name="Liangjie G."/>
            <person name="Shama S.A."/>
            <person name="Qi N."/>
            <person name="Qin L."/>
            <person name="Liao S."/>
            <person name="Zhao Y."/>
        </authorList>
    </citation>
    <scope>INVOLVEMENT IN COH1</scope>
    <scope>TISSUE SPECIFICITY</scope>
</reference>
<reference key="39">
    <citation type="journal article" date="2021" name="J. Mol. Neurosci.">
        <title>A Novel VPS13B Mutation Identified by Whole-Exome Sequencing in Iranian Patients with Cohen Syndrome.</title>
        <authorList>
            <person name="Karimzadeh M.R."/>
            <person name="Omidi F."/>
            <person name="Sahebalzamani A."/>
            <person name="Saeidi K."/>
        </authorList>
    </citation>
    <scope>VARIANT COH1 3457-GLN--PRO-4022 DEL</scope>
</reference>
<reference key="40">
    <citation type="journal article" date="2021" name="Pharmacogenomics">
        <title>Identification of a Novel VPS13B Mutation in a Chinese Patient with Cohen Syndrome by Whole-Exome Sequencing.</title>
        <authorList>
            <person name="Hu X."/>
            <person name="Huang T."/>
            <person name="Liu Y."/>
            <person name="Zhang L."/>
            <person name="Zhu L."/>
            <person name="Peng X."/>
            <person name="Zhang S."/>
        </authorList>
    </citation>
    <scope>INVOLVEMENT IN COH1</scope>
</reference>
<reference key="41">
    <citation type="journal article" date="2021" name="Sci. Rep.">
        <title>Cystoid maculopathy is a frequent feature of Cohen syndrome-associated retinopathy.</title>
        <authorList>
            <person name="Gabrielle P.H."/>
            <person name="Faivre L."/>
            <person name="Audo I."/>
            <person name="Zanlonghi X."/>
            <person name="Dollfus H."/>
            <person name="Thiadens A.A.H.J."/>
            <person name="Zeitz C."/>
            <person name="Mancini G.M.S."/>
            <person name="Perdomo Y."/>
            <person name="Mohand-Said S."/>
            <person name="Lize E."/>
            <person name="Lhussiez V."/>
            <person name="Nandrot E.F."/>
            <person name="Acar N."/>
            <person name="Creuzot-Garcher C."/>
            <person name="Sahel J.A."/>
            <person name="Ansar M."/>
            <person name="Thauvin-Robinet C."/>
            <person name="Duplomb L."/>
            <person name="Da Costa R."/>
        </authorList>
    </citation>
    <scope>VARIANTS COH1 336-GLN--PRO-4022 DEL; 579-ILE--PRO-4022 DEL; 692-ARG--PRO-4022 DEL; 971-ARG--PRO-4022 DEL; 1143-ARG--PRO-4022 DEL; 1227-TYR--PRO-4022 DEL; 1471-ARG--PRO-4022 DEL; PHE-3616 DEL AND 3627-THR--HIS-3633 DELINS ILE</scope>
</reference>
<comment type="function">
    <text evidence="1 2 14 17 19 21 27 30 44 45">Mediates the transfer of lipids between membranes at organelle contact sites (By similarity). Binds phosphatidylinositol 3-phosphate (By similarity). Functions as a tethering factor in the slow endocytic recycling pathway, to assist traffic between early and recycling endosomes (PubMed:24334764, PubMed:30962439, PubMed:32375900). Involved in the transport of proacrosomal vesicles to the nuclear dense lamina (NDL) during spermatid development (By similarity). Plays a role in the assembly of the Golgi apparatus, possibly by mediating trafficking to the Golgi membrane (PubMed:21865173). Plays a role in the development of the nervous system, and may be required for neuron projection development (PubMed:25492866, PubMed:32560273). May also play a role during adipose tissue development (PubMed:26358774). Required for maintenance of the ocular lens (By similarity).</text>
</comment>
<comment type="subunit">
    <text evidence="2 18">Interacts with STX6 (By similarity). Interacts with STX12 (By similarity). Interacts with RAB6A isoform 1 (GTP-bound) and isoform 2 (GTP-bound) (PubMed:25492866). Interacts with RAB6B (GTP-bound) (PubMed:25492866).</text>
</comment>
<comment type="subcellular location">
    <subcellularLocation>
        <location evidence="2">Recycling endosome membrane</location>
        <topology evidence="43">Peripheral membrane protein</topology>
    </subcellularLocation>
    <subcellularLocation>
        <location evidence="2">Cytoplasmic vesicle</location>
        <location evidence="2">Secretory vesicle</location>
        <location evidence="2">Acrosome membrane</location>
        <topology evidence="43">Peripheral membrane protein</topology>
    </subcellularLocation>
    <subcellularLocation>
        <location evidence="14 18">Golgi apparatus</location>
        <location evidence="14 18">cis-Golgi network membrane</location>
        <topology evidence="14">Peripheral membrane protein</topology>
    </subcellularLocation>
    <subcellularLocation>
        <location evidence="14">Endoplasmic reticulum-Golgi intermediate compartment membrane</location>
        <topology evidence="14">Peripheral membrane protein</topology>
    </subcellularLocation>
    <subcellularLocation>
        <location evidence="14">Golgi apparatus</location>
        <location evidence="14">trans-Golgi network membrane</location>
        <topology evidence="14">Peripheral membrane protein</topology>
    </subcellularLocation>
    <subcellularLocation>
        <location evidence="18">Early endosome membrane</location>
        <topology evidence="43">Peripheral membrane protein</topology>
    </subcellularLocation>
    <subcellularLocation>
        <location evidence="18">Lysosome membrane</location>
        <topology evidence="43">Peripheral membrane protein</topology>
    </subcellularLocation>
    <text evidence="2">Localizes to proacrosomal and acrosomal vesicles and not the Golgi apparatus during acrosome formation.</text>
</comment>
<comment type="alternative products">
    <event type="alternative splicing"/>
    <isoform>
        <id>Q7Z7G8-1</id>
        <name>1</name>
        <name>1A</name>
        <sequence type="displayed"/>
    </isoform>
    <isoform>
        <id>Q7Z7G8-2</id>
        <name>2</name>
        <name>2A</name>
        <sequence type="described" ref="VSP_009408"/>
    </isoform>
    <isoform>
        <id>Q7Z7G8-3</id>
        <name>3</name>
        <sequence type="described" ref="VSP_009409 VSP_009410"/>
    </isoform>
    <isoform>
        <id>Q7Z7G8-4</id>
        <name>4</name>
        <sequence type="described" ref="VSP_009406 VSP_009407"/>
    </isoform>
    <isoform>
        <id>Q7Z7G8-5</id>
        <name>5</name>
        <sequence type="described" ref="VSP_009404 VSP_009405"/>
    </isoform>
    <isoform>
        <id>Q7Z7G8-6</id>
        <name>6</name>
        <sequence type="described" ref="VSP_039837"/>
    </isoform>
</comment>
<comment type="tissue specificity">
    <text evidence="5 11 32">Widely expressed (PubMed:12730828). There is apparent differential expression of different transcripts (PubMed:12730828, PubMed:19006247). In fetal brain, lung, liver, and kidney, two transcripts of 2 and 5 kb are identified (PubMed:12730828). These transcripts are also seen in all adult tissues analyzed (PubMed:12730828). A larger transcript (12-14 kb) is expressed in prostate, testis, ovary, and colon in the adult (PubMed:12730828). Expression is very low in adult brain tissue (PubMed:12730828). Expressed in peripheral blood lymphocytes (PubMed:33025479). Isoform 1 and isoform 2 are expressed in brain and retina (PubMed:12730828, PubMed:19006247). Isoform 2 is expressed ubiquitously (PubMed:12730828, PubMed:19006247).</text>
</comment>
<comment type="disease" evidence="5 6 7 8 9 11 12 13 14 16 17 19 20 22 23 24 25 26 28 29 30 31 32 33 34 35 36 37 38 39">
    <disease id="DI-00314">
        <name>Cohen syndrome</name>
        <acronym>COH1</acronym>
        <description>A rare autosomal recessive disorder characterized by obesity, hypotonia, intellectual deficit, characteristic craniofacial dysmorphism and abnormalities of the hands and feet. Characteristic facial features include high-arched or wave-shaped eyelids, a short philtrum, thick hair and low hairline.</description>
        <dbReference type="MIM" id="216550"/>
    </disease>
    <text>The disease is caused by variants affecting the gene represented in this entry.</text>
</comment>
<comment type="similarity">
    <text evidence="43">Belongs to the VPS13 family.</text>
</comment>
<comment type="sequence caution" evidence="43">
    <conflict type="erroneous initiation">
        <sequence resource="EMBL-CDS" id="BAC03664"/>
    </conflict>
    <text>Truncated N-terminus.</text>
</comment>
<organism>
    <name type="scientific">Homo sapiens</name>
    <name type="common">Human</name>
    <dbReference type="NCBI Taxonomy" id="9606"/>
    <lineage>
        <taxon>Eukaryota</taxon>
        <taxon>Metazoa</taxon>
        <taxon>Chordata</taxon>
        <taxon>Craniata</taxon>
        <taxon>Vertebrata</taxon>
        <taxon>Euteleostomi</taxon>
        <taxon>Mammalia</taxon>
        <taxon>Eutheria</taxon>
        <taxon>Euarchontoglires</taxon>
        <taxon>Primates</taxon>
        <taxon>Haplorrhini</taxon>
        <taxon>Catarrhini</taxon>
        <taxon>Hominidae</taxon>
        <taxon>Homo</taxon>
    </lineage>
</organism>
<feature type="chain" id="PRO_0000065880" description="Intermembrane lipid transfer protein VPS13B">
    <location>
        <begin position="1"/>
        <end position="4022"/>
    </location>
</feature>
<feature type="domain" description="Chorein N-terminal" evidence="3">
    <location>
        <begin position="2"/>
        <end position="102"/>
    </location>
</feature>
<feature type="domain" description="SHR-BD" evidence="3">
    <location>
        <begin position="2631"/>
        <end position="2716"/>
    </location>
</feature>
<feature type="region of interest" description="Disordered" evidence="4">
    <location>
        <begin position="100"/>
        <end position="134"/>
    </location>
</feature>
<feature type="region of interest" description="Disordered" evidence="4">
    <location>
        <begin position="1247"/>
        <end position="1314"/>
    </location>
</feature>
<feature type="region of interest" description="Disordered" evidence="4">
    <location>
        <begin position="1860"/>
        <end position="1880"/>
    </location>
</feature>
<feature type="region of interest" description="Localizes the protein to the Golgi apparatus" evidence="14">
    <location>
        <begin position="3908"/>
        <end position="4022"/>
    </location>
</feature>
<feature type="compositionally biased region" description="Polar residues" evidence="4">
    <location>
        <begin position="103"/>
        <end position="119"/>
    </location>
</feature>
<feature type="compositionally biased region" description="Polar residues" evidence="4">
    <location>
        <begin position="1264"/>
        <end position="1292"/>
    </location>
</feature>
<feature type="compositionally biased region" description="Polar residues" evidence="4">
    <location>
        <begin position="1302"/>
        <end position="1314"/>
    </location>
</feature>
<feature type="compositionally biased region" description="Basic and acidic residues" evidence="4">
    <location>
        <begin position="1860"/>
        <end position="1872"/>
    </location>
</feature>
<feature type="modified residue" description="Phosphoserine" evidence="46">
    <location>
        <position position="414"/>
    </location>
</feature>
<feature type="modified residue" description="Phosphoserine" evidence="46">
    <location>
        <position position="999"/>
    </location>
</feature>
<feature type="modified residue" description="Phosphoserine" evidence="46">
    <location>
        <position position="1002"/>
    </location>
</feature>
<feature type="modified residue" description="Phosphoserine" evidence="46">
    <location>
        <position position="1033"/>
    </location>
</feature>
<feature type="modified residue" description="Phosphoserine" evidence="46">
    <location>
        <position position="1815"/>
    </location>
</feature>
<feature type="splice variant" id="VSP_009404" description="In isoform 5." evidence="40 41">
    <original>LTEMQVESSYYSP</original>
    <variation>VGLFSCCLYLYQL</variation>
    <location>
        <begin position="403"/>
        <end position="415"/>
    </location>
</feature>
<feature type="splice variant" id="VSP_009405" description="In isoform 5." evidence="40 41">
    <location>
        <begin position="416"/>
        <end position="4022"/>
    </location>
</feature>
<feature type="splice variant" id="VSP_009406" description="In isoform 4." evidence="40">
    <original>GVKSKNPLPTLEGSIQNVELKYCST</original>
    <variation>EIGSCYVAQVDLELLASNDPPTSTS</variation>
    <location>
        <begin position="839"/>
        <end position="863"/>
    </location>
</feature>
<feature type="splice variant" id="VSP_009407" description="In isoform 4." evidence="40">
    <location>
        <begin position="864"/>
        <end position="4022"/>
    </location>
</feature>
<feature type="splice variant" id="VSP_039837" description="In isoform 6." evidence="41">
    <location>
        <position position="977"/>
    </location>
</feature>
<feature type="splice variant" id="VSP_009408" description="In isoform 2." evidence="40 42">
    <original>SLGEECWSLGQCGGVFLSCTDKLNRRTLLVRPISKQDPFSNCSGFFPS</original>
    <variation>RPGEGWQSGHFEGVFLQCKEKSV</variation>
    <location>
        <begin position="1386"/>
        <end position="1433"/>
    </location>
</feature>
<feature type="splice variant" id="VSP_009409" description="In isoform 3." evidence="40">
    <original>SLGEECWSLGQCGGVFLSCTDKLNRRTLLVRPISKQDPFSNC</original>
    <variation>RPGEGWQSGHFEGVFLQCKEKSVPWGRVLVFGAMWRCLPFLY</variation>
    <location>
        <begin position="1386"/>
        <end position="1427"/>
    </location>
</feature>
<feature type="splice variant" id="VSP_009410" description="In isoform 3." evidence="40">
    <location>
        <begin position="1428"/>
        <end position="4022"/>
    </location>
</feature>
<feature type="sequence variant" id="VAR_086594" description="In COH1." evidence="25">
    <location>
        <begin position="21"/>
        <end position="4022"/>
    </location>
</feature>
<feature type="sequence variant" id="VAR_086595" description="In COH1; leads to an accumulation of liquid droplets and accelerates differentiation of adipose cells; response to insulin is abnormal.; dbSNP:rs144539572." evidence="16 19">
    <location>
        <begin position="146"/>
        <end position="4022"/>
    </location>
</feature>
<feature type="sequence variant" id="VAR_086596" description="In COH1; dbSNP:rs1554625617." evidence="16 36">
    <location>
        <begin position="336"/>
        <end position="4022"/>
    </location>
</feature>
<feature type="sequence variant" id="VAR_086597" description="In COH1." evidence="16 19 36">
    <location>
        <begin position="579"/>
        <end position="4022"/>
    </location>
</feature>
<feature type="sequence variant" id="VAR_086598" description="In COH1; glycosylation is defective; accelerates differentiation of adipose cells; dbSNP:rs180177356." evidence="16 17 19 36">
    <location>
        <begin position="692"/>
        <end position="4022"/>
    </location>
</feature>
<feature type="sequence variant" id="VAR_058749" description="In dbSNP:rs61753721." evidence="9">
    <original>A</original>
    <variation>T</variation>
    <location>
        <position position="829"/>
    </location>
</feature>
<feature type="sequence variant" id="VAR_058750" description="In dbSNP:rs150185067." evidence="9">
    <original>V</original>
    <variation>I</variation>
    <location>
        <position position="866"/>
    </location>
</feature>
<feature type="sequence variant" id="VAR_086599" description="In COH1; dbSNP:rs120074152." evidence="19 36">
    <location>
        <begin position="971"/>
        <end position="4022"/>
    </location>
</feature>
<feature type="sequence variant" id="VAR_057750" description="In dbSNP:rs35342235.">
    <original>P</original>
    <variation>L</variation>
    <location>
        <position position="1138"/>
    </location>
</feature>
<feature type="sequence variant" id="VAR_086600" description="In COH1; accelerates differentiation of adipose cells; response to insulin is abnormal.; dbSNP:rs386834080." evidence="16 17 19 36">
    <location>
        <begin position="1143"/>
        <end position="4022"/>
    </location>
</feature>
<feature type="sequence variant" id="VAR_086601" description="In COH1; dbSNP:rs1554814266." evidence="19 36">
    <location>
        <begin position="1227"/>
        <end position="4022"/>
    </location>
</feature>
<feature type="sequence variant" id="VAR_086602" description="In COH1; dbSNP:rs386834086." evidence="36">
    <location>
        <begin position="1471"/>
        <end position="4022"/>
    </location>
</feature>
<feature type="sequence variant" id="VAR_058751" description="In COH1; dbSNP:rs386834088." evidence="11">
    <location>
        <position position="1494"/>
    </location>
</feature>
<feature type="sequence variant" id="VAR_058752" description="In COH1.">
    <location>
        <begin position="1739"/>
        <end position="1744"/>
    </location>
</feature>
<feature type="sequence variant" id="VAR_058753" description="In dbSNP:rs139640224." evidence="9">
    <original>I</original>
    <variation>V</variation>
    <location>
        <position position="1994"/>
    </location>
</feature>
<feature type="sequence variant" id="VAR_086603" description="In COH1; dbSNP:rs371364257." evidence="38">
    <location>
        <begin position="2067"/>
        <end position="4022"/>
    </location>
</feature>
<feature type="sequence variant" id="VAR_017759" description="In COH1; uncertain significance; dbSNP:rs120074149." evidence="5">
    <original>L</original>
    <variation>R</variation>
    <location>
        <position position="2193"/>
    </location>
</feature>
<feature type="sequence variant" id="VAR_038422" description="In COH1; dbSNP:rs386834104." evidence="7">
    <original>Y</original>
    <variation>C</variation>
    <location>
        <position position="2341"/>
    </location>
</feature>
<feature type="sequence variant" id="VAR_069429" description="Found in a patient with intellectual disability and facial dysmorphisms; dbSNP:rs201963516." evidence="15">
    <original>V</original>
    <variation>I</variation>
    <location>
        <position position="2481"/>
    </location>
</feature>
<feature type="sequence variant" id="VAR_086604" description="In COH1; early endosomes are abnormal, lysosomes are enlarged and glycosylation is defective." evidence="16 17">
    <location>
        <begin position="2548"/>
        <end position="4022"/>
    </location>
</feature>
<feature type="sequence variant" id="VAR_057751" description="In dbSNP:rs7833870.">
    <original>V</original>
    <variation>A</variation>
    <location>
        <position position="2584"/>
    </location>
</feature>
<feature type="sequence variant" id="VAR_038423" description="In COH1; dbSNP:rs120074153." evidence="7">
    <original>G</original>
    <variation>D</variation>
    <location>
        <position position="2645"/>
    </location>
</feature>
<feature type="sequence variant" id="VAR_086605" description="In COH1; dbSNP:rs777019428." evidence="23">
    <location>
        <begin position="2704"/>
        <end position="4022"/>
    </location>
</feature>
<feature type="sequence variant" id="VAR_058754" description="In COH1; dbSNP:rs180177370." evidence="9">
    <original>S</original>
    <variation>L</variation>
    <location>
        <position position="2773"/>
    </location>
</feature>
<feature type="sequence variant" id="VAR_058755" description="In COH1; dbSNP:rs120074155." evidence="8">
    <original>I</original>
    <variation>T</variation>
    <location>
        <position position="2820"/>
    </location>
</feature>
<feature type="sequence variant" id="VAR_058756" description="In dbSNP:rs371325199." evidence="9">
    <original>Y</original>
    <variation>C</variation>
    <location>
        <position position="2822"/>
    </location>
</feature>
<feature type="sequence variant" id="VAR_086606" description="In COH1; disrupts protein localization to the perinuclear region; Golgi stacks are fragmented, early endosomes are abnormal, lysosomes are enlarged and glycosylation is defective; leads to an accumulation of liquid droplets and accelerates differentiation of adipose cells; response to insulin is abnormal.; dbSNP:rs386834113." evidence="14 16 17">
    <location>
        <begin position="2839"/>
        <end position="4022"/>
    </location>
</feature>
<feature type="sequence variant" id="VAR_086607" description="In COH1." evidence="37">
    <location>
        <begin position="2900"/>
        <end position="4022"/>
    </location>
</feature>
<feature type="sequence variant" id="VAR_038424" description="In COH1; dbSNP:rs28940272." evidence="6">
    <original>N</original>
    <variation>S</variation>
    <location>
        <position position="2993"/>
    </location>
</feature>
<feature type="sequence variant" id="VAR_036325" description="In a breast cancer sample; somatic mutation." evidence="10">
    <original>L</original>
    <variation>V</variation>
    <location>
        <position position="3001"/>
    </location>
</feature>
<feature type="sequence variant" id="VAR_058757" evidence="9">
    <original>S</original>
    <variation>R</variation>
    <location>
        <position position="3142"/>
    </location>
</feature>
<feature type="sequence variant" id="VAR_086608" description="In COH1." evidence="24">
    <location>
        <begin position="3282"/>
        <end position="4022"/>
    </location>
</feature>
<feature type="sequence variant" id="VAR_057752" description="In dbSNP:rs6468694.">
    <original>G</original>
    <variation>R</variation>
    <location>
        <position position="3432"/>
    </location>
</feature>
<feature type="sequence variant" id="VAR_086609" description="In COH1; uncertain significance; dbSNP:rs191174682." evidence="30">
    <original>V</original>
    <variation>M</variation>
    <location>
        <position position="3445"/>
    </location>
</feature>
<feature type="sequence variant" id="VAR_086610" description="In COH1." evidence="34">
    <location>
        <begin position="3457"/>
        <end position="4022"/>
    </location>
</feature>
<feature type="sequence variant" id="VAR_086611" description="In COH1; dbSNP:rs1554581821." evidence="36">
    <location>
        <position position="3616"/>
    </location>
</feature>
<feature type="sequence variant" id="VAR_086612" description="In COH1." evidence="16 17 19 36">
    <original>TARQLVH</original>
    <variation>I</variation>
    <location>
        <begin position="3627"/>
        <end position="3633"/>
    </location>
</feature>
<feature type="sequence conflict" description="In Ref. 3; BAA91275." evidence="43" ref="3">
    <original>F</original>
    <variation>S</variation>
    <location>
        <position position="401"/>
    </location>
</feature>
<feature type="sequence conflict" description="In Ref. 1; AAP41102/AAP41103/AAP41104/AAP41105 and 3; BAC03664." evidence="43" ref="1 3">
    <original>M</original>
    <variation>V</variation>
    <location>
        <position position="544"/>
    </location>
</feature>
<feature type="sequence conflict" description="In Ref. 1; AAP41102/AAP41103/AAP41104/AAP41105 and 3; BAC03664." evidence="43" ref="1 3">
    <original>D</original>
    <variation>N</variation>
    <location>
        <position position="618"/>
    </location>
</feature>
<feature type="sequence conflict" description="In Ref. 1; AAP41102." evidence="43" ref="1">
    <original>L</original>
    <variation>H</variation>
    <location>
        <position position="1387"/>
    </location>
</feature>
<feature type="sequence conflict" description="In Ref. 1; AAP41102." evidence="43" ref="1">
    <original>F</original>
    <variation>I</variation>
    <location>
        <position position="1401"/>
    </location>
</feature>
<feature type="sequence conflict" description="In Ref. 1; AAP41102." evidence="43" ref="1">
    <original>S</original>
    <variation>R</variation>
    <location>
        <position position="1425"/>
    </location>
</feature>
<feature type="sequence conflict" description="In Ref. 1; AAP41102/AAP41103." evidence="43" ref="1">
    <original>A</original>
    <variation>D</variation>
    <location>
        <position position="1673"/>
    </location>
</feature>
<feature type="sequence variant" id="VAR_082932" description="In COH1; dbSNP:rs7460625." evidence="30">
    <location sequence="Q7Z7G8-5">
        <begin position="413"/>
        <end position="415"/>
    </location>
</feature>